<feature type="signal peptide" evidence="1">
    <location>
        <begin position="1"/>
        <end position="16"/>
    </location>
</feature>
<feature type="chain" id="PRO_0000415846" description="WAP four-disulfide core domain protein 3">
    <location>
        <begin position="17"/>
        <end position="130"/>
    </location>
</feature>
<feature type="domain" description="WAP 1" evidence="2">
    <location>
        <begin position="17"/>
        <end position="61"/>
    </location>
</feature>
<feature type="domain" description="WAP 2" evidence="2">
    <location>
        <begin position="62"/>
        <end position="106"/>
    </location>
</feature>
<feature type="glycosylation site" description="N-linked (GlcNAc...) asparagine" evidence="1">
    <location>
        <position position="116"/>
    </location>
</feature>
<feature type="disulfide bond" evidence="2">
    <location>
        <begin position="25"/>
        <end position="49"/>
    </location>
</feature>
<feature type="disulfide bond" evidence="2">
    <location>
        <begin position="32"/>
        <end position="53"/>
    </location>
</feature>
<feature type="disulfide bond" evidence="2">
    <location>
        <begin position="36"/>
        <end position="48"/>
    </location>
</feature>
<feature type="disulfide bond" evidence="2">
    <location>
        <begin position="42"/>
        <end position="57"/>
    </location>
</feature>
<feature type="disulfide bond" evidence="2">
    <location>
        <begin position="69"/>
        <end position="94"/>
    </location>
</feature>
<feature type="disulfide bond" evidence="2">
    <location>
        <begin position="77"/>
        <end position="98"/>
    </location>
</feature>
<feature type="disulfide bond" evidence="2">
    <location>
        <begin position="81"/>
        <end position="93"/>
    </location>
</feature>
<feature type="disulfide bond" evidence="2">
    <location>
        <begin position="87"/>
        <end position="102"/>
    </location>
</feature>
<accession>Q14AE4</accession>
<reference key="1">
    <citation type="journal article" date="2009" name="PLoS Biol.">
        <title>Lineage-specific biology revealed by a finished genome assembly of the mouse.</title>
        <authorList>
            <person name="Church D.M."/>
            <person name="Goodstadt L."/>
            <person name="Hillier L.W."/>
            <person name="Zody M.C."/>
            <person name="Goldstein S."/>
            <person name="She X."/>
            <person name="Bult C.J."/>
            <person name="Agarwala R."/>
            <person name="Cherry J.L."/>
            <person name="DiCuccio M."/>
            <person name="Hlavina W."/>
            <person name="Kapustin Y."/>
            <person name="Meric P."/>
            <person name="Maglott D."/>
            <person name="Birtle Z."/>
            <person name="Marques A.C."/>
            <person name="Graves T."/>
            <person name="Zhou S."/>
            <person name="Teague B."/>
            <person name="Potamousis K."/>
            <person name="Churas C."/>
            <person name="Place M."/>
            <person name="Herschleb J."/>
            <person name="Runnheim R."/>
            <person name="Forrest D."/>
            <person name="Amos-Landgraf J."/>
            <person name="Schwartz D.C."/>
            <person name="Cheng Z."/>
            <person name="Lindblad-Toh K."/>
            <person name="Eichler E.E."/>
            <person name="Ponting C.P."/>
        </authorList>
    </citation>
    <scope>NUCLEOTIDE SEQUENCE [LARGE SCALE GENOMIC DNA]</scope>
    <source>
        <strain>C57BL/6J</strain>
    </source>
</reference>
<reference key="2">
    <citation type="submission" date="2005-07" db="EMBL/GenBank/DDBJ databases">
        <authorList>
            <person name="Mural R.J."/>
            <person name="Adams M.D."/>
            <person name="Myers E.W."/>
            <person name="Smith H.O."/>
            <person name="Venter J.C."/>
        </authorList>
    </citation>
    <scope>NUCLEOTIDE SEQUENCE [LARGE SCALE GENOMIC DNA]</scope>
</reference>
<reference key="3">
    <citation type="journal article" date="2004" name="Genome Res.">
        <title>The status, quality, and expansion of the NIH full-length cDNA project: the Mammalian Gene Collection (MGC).</title>
        <authorList>
            <consortium name="The MGC Project Team"/>
        </authorList>
    </citation>
    <scope>NUCLEOTIDE SEQUENCE [LARGE SCALE MRNA]</scope>
    <source>
        <tissue>Brain</tissue>
    </source>
</reference>
<gene>
    <name type="primary">Wfdc3</name>
    <name type="synonym">Wap14</name>
</gene>
<proteinExistence type="evidence at transcript level"/>
<organism>
    <name type="scientific">Mus musculus</name>
    <name type="common">Mouse</name>
    <dbReference type="NCBI Taxonomy" id="10090"/>
    <lineage>
        <taxon>Eukaryota</taxon>
        <taxon>Metazoa</taxon>
        <taxon>Chordata</taxon>
        <taxon>Craniata</taxon>
        <taxon>Vertebrata</taxon>
        <taxon>Euteleostomi</taxon>
        <taxon>Mammalia</taxon>
        <taxon>Eutheria</taxon>
        <taxon>Euarchontoglires</taxon>
        <taxon>Glires</taxon>
        <taxon>Rodentia</taxon>
        <taxon>Myomorpha</taxon>
        <taxon>Muroidea</taxon>
        <taxon>Muridae</taxon>
        <taxon>Murinae</taxon>
        <taxon>Mus</taxon>
        <taxon>Mus</taxon>
    </lineage>
</organism>
<sequence>MKALLALGFLASWVAAGEHALRGECPADPLPCQELCTGDESCPQGHKCCSTGCGHACRGDIEGGRDGQCPRILVGLCIVQCMMDENCQSGERCCKSGCGRFCIPGLQPLQQLKDSNLTDGFNSKLEAQAP</sequence>
<dbReference type="EMBL" id="AL591127">
    <property type="status" value="NOT_ANNOTATED_CDS"/>
    <property type="molecule type" value="Genomic_DNA"/>
</dbReference>
<dbReference type="EMBL" id="CH466551">
    <property type="protein sequence ID" value="EDL06411.1"/>
    <property type="molecule type" value="Genomic_DNA"/>
</dbReference>
<dbReference type="EMBL" id="BC116847">
    <property type="protein sequence ID" value="AAI16848.1"/>
    <property type="molecule type" value="mRNA"/>
</dbReference>
<dbReference type="EMBL" id="BC116875">
    <property type="protein sequence ID" value="AAI16876.1"/>
    <property type="molecule type" value="mRNA"/>
</dbReference>
<dbReference type="CCDS" id="CCDS17053.1"/>
<dbReference type="RefSeq" id="NP_001405663.1">
    <property type="nucleotide sequence ID" value="NM_001418734.1"/>
</dbReference>
<dbReference type="RefSeq" id="NP_001405664.1">
    <property type="nucleotide sequence ID" value="NM_001418735.1"/>
</dbReference>
<dbReference type="RefSeq" id="NP_082237.1">
    <property type="nucleotide sequence ID" value="NM_027961.2"/>
</dbReference>
<dbReference type="RefSeq" id="XP_006500255.1">
    <property type="nucleotide sequence ID" value="XM_006500192.2"/>
</dbReference>
<dbReference type="RefSeq" id="XP_006500256.1">
    <property type="nucleotide sequence ID" value="XM_006500193.3"/>
</dbReference>
<dbReference type="RefSeq" id="XP_006500257.1">
    <property type="nucleotide sequence ID" value="XM_006500194.3"/>
</dbReference>
<dbReference type="RefSeq" id="XP_030107954.1">
    <property type="nucleotide sequence ID" value="XM_030252094.1"/>
</dbReference>
<dbReference type="RefSeq" id="XP_036018469.1">
    <property type="nucleotide sequence ID" value="XM_036162576.1"/>
</dbReference>
<dbReference type="SMR" id="Q14AE4"/>
<dbReference type="STRING" id="10090.ENSMUSP00000099385"/>
<dbReference type="GlyCosmos" id="Q14AE4">
    <property type="glycosylation" value="1 site, No reported glycans"/>
</dbReference>
<dbReference type="GlyGen" id="Q14AE4">
    <property type="glycosylation" value="1 site"/>
</dbReference>
<dbReference type="PaxDb" id="10090-ENSMUSP00000099385"/>
<dbReference type="PeptideAtlas" id="Q14AE4"/>
<dbReference type="ProteomicsDB" id="299673"/>
<dbReference type="Antibodypedia" id="59149">
    <property type="antibodies" value="22 antibodies from 12 providers"/>
</dbReference>
<dbReference type="Ensembl" id="ENSMUST00000103096.10">
    <property type="protein sequence ID" value="ENSMUSP00000099385.4"/>
    <property type="gene ID" value="ENSMUSG00000076434.10"/>
</dbReference>
<dbReference type="GeneID" id="71856"/>
<dbReference type="KEGG" id="mmu:71856"/>
<dbReference type="UCSC" id="uc008nvt.1">
    <property type="organism name" value="mouse"/>
</dbReference>
<dbReference type="AGR" id="MGI:1923897"/>
<dbReference type="CTD" id="140686"/>
<dbReference type="MGI" id="MGI:1923897">
    <property type="gene designation" value="Wfdc3"/>
</dbReference>
<dbReference type="VEuPathDB" id="HostDB:ENSMUSG00000076434"/>
<dbReference type="eggNOG" id="ENOG502TB9A">
    <property type="taxonomic scope" value="Eukaryota"/>
</dbReference>
<dbReference type="GeneTree" id="ENSGT00730000111454"/>
<dbReference type="HOGENOM" id="CLU_105901_1_0_1"/>
<dbReference type="InParanoid" id="Q14AE4"/>
<dbReference type="OMA" id="NPCENLC"/>
<dbReference type="OrthoDB" id="4473401at2759"/>
<dbReference type="PhylomeDB" id="Q14AE4"/>
<dbReference type="TreeFam" id="TF338375"/>
<dbReference type="BioGRID-ORCS" id="71856">
    <property type="hits" value="1 hit in 78 CRISPR screens"/>
</dbReference>
<dbReference type="PRO" id="PR:Q14AE4"/>
<dbReference type="Proteomes" id="UP000000589">
    <property type="component" value="Chromosome 2"/>
</dbReference>
<dbReference type="RNAct" id="Q14AE4">
    <property type="molecule type" value="protein"/>
</dbReference>
<dbReference type="Bgee" id="ENSMUSG00000076434">
    <property type="expression patterns" value="Expressed in blastoderm cell in morula and 72 other cell types or tissues"/>
</dbReference>
<dbReference type="ExpressionAtlas" id="Q14AE4">
    <property type="expression patterns" value="baseline and differential"/>
</dbReference>
<dbReference type="GO" id="GO:0005576">
    <property type="term" value="C:extracellular region"/>
    <property type="evidence" value="ECO:0007669"/>
    <property type="project" value="UniProtKB-SubCell"/>
</dbReference>
<dbReference type="GO" id="GO:0004867">
    <property type="term" value="F:serine-type endopeptidase inhibitor activity"/>
    <property type="evidence" value="ECO:0007669"/>
    <property type="project" value="UniProtKB-KW"/>
</dbReference>
<dbReference type="Gene3D" id="4.10.75.10">
    <property type="entry name" value="Elafin-like"/>
    <property type="match status" value="2"/>
</dbReference>
<dbReference type="InterPro" id="IPR036645">
    <property type="entry name" value="Elafin-like_sf"/>
</dbReference>
<dbReference type="InterPro" id="IPR008197">
    <property type="entry name" value="WAP_dom"/>
</dbReference>
<dbReference type="InterPro" id="IPR050514">
    <property type="entry name" value="WAP_four-disulfide_core"/>
</dbReference>
<dbReference type="PANTHER" id="PTHR19441:SF97">
    <property type="entry name" value="WAP FOUR-DISULFIDE CORE DOMAIN PROTEIN 3"/>
    <property type="match status" value="1"/>
</dbReference>
<dbReference type="PANTHER" id="PTHR19441">
    <property type="entry name" value="WHEY ACDIC PROTEIN WAP"/>
    <property type="match status" value="1"/>
</dbReference>
<dbReference type="Pfam" id="PF00095">
    <property type="entry name" value="WAP"/>
    <property type="match status" value="2"/>
</dbReference>
<dbReference type="SMART" id="SM00217">
    <property type="entry name" value="WAP"/>
    <property type="match status" value="2"/>
</dbReference>
<dbReference type="SUPFAM" id="SSF57256">
    <property type="entry name" value="Elafin-like"/>
    <property type="match status" value="2"/>
</dbReference>
<dbReference type="PROSITE" id="PS51390">
    <property type="entry name" value="WAP"/>
    <property type="match status" value="2"/>
</dbReference>
<comment type="subcellular location">
    <subcellularLocation>
        <location evidence="3">Secreted</location>
    </subcellularLocation>
</comment>
<protein>
    <recommendedName>
        <fullName>WAP four-disulfide core domain protein 3</fullName>
    </recommendedName>
    <alternativeName>
        <fullName>Putative protease inhibitor WAP14</fullName>
    </alternativeName>
</protein>
<keyword id="KW-1015">Disulfide bond</keyword>
<keyword id="KW-0325">Glycoprotein</keyword>
<keyword id="KW-0646">Protease inhibitor</keyword>
<keyword id="KW-1185">Reference proteome</keyword>
<keyword id="KW-0677">Repeat</keyword>
<keyword id="KW-0964">Secreted</keyword>
<keyword id="KW-0722">Serine protease inhibitor</keyword>
<keyword id="KW-0732">Signal</keyword>
<name>WFDC3_MOUSE</name>
<evidence type="ECO:0000255" key="1"/>
<evidence type="ECO:0000255" key="2">
    <source>
        <dbReference type="PROSITE-ProRule" id="PRU00722"/>
    </source>
</evidence>
<evidence type="ECO:0000305" key="3"/>